<feature type="chain" id="PRO_0000317724" description="Deubiquitinase DESI2">
    <location>
        <begin position="1"/>
        <end position="194"/>
    </location>
</feature>
<feature type="domain" description="PPPDE" evidence="3">
    <location>
        <begin position="5"/>
        <end position="149"/>
    </location>
</feature>
<feature type="region of interest" description="Disordered" evidence="4">
    <location>
        <begin position="161"/>
        <end position="194"/>
    </location>
</feature>
<feature type="compositionally biased region" description="Acidic residues" evidence="4">
    <location>
        <begin position="163"/>
        <end position="172"/>
    </location>
</feature>
<feature type="compositionally biased region" description="Low complexity" evidence="4">
    <location>
        <begin position="173"/>
        <end position="186"/>
    </location>
</feature>
<feature type="active site" evidence="3">
    <location>
        <position position="30"/>
    </location>
</feature>
<feature type="active site" evidence="1 3">
    <location>
        <position position="108"/>
    </location>
</feature>
<sequence>MGANQLVVLNVYDMYWMNEYTSSIGIGVFHSGIEVYGREFAYGGHPYPFSGIFEISPGNASELGETFKFKEAVVLGSTDFLEDDIEKIVEELGKEYKGNAYHLMHKNCNHFSSALSEILCGKEIPRWINRLAYFSSCIPFLQSCLPKEWLTPAALQSSVSQELQDELEEAEDAAASASMGSASAGSRPGRHTKL</sequence>
<name>DESI2_PIG</name>
<comment type="function">
    <text evidence="1">Has deubiquitinating activity towards 'Lys-48'- and 'Lys-63'-linked polyubiquitin chains. Deubiquitinates 'Lys-48'-linked polyubiquitination of RPS7 leading to its stabilization. Exhibits palmitoyl protein thioesterase (S-depalmitoylation) activity towards synthetic substrates 4-methylumbelliferyl-6-S-palmitoyl-beta-D-glucopyranoside and S-depalmitoylation probe 5 (DPP-5).</text>
</comment>
<comment type="catalytic activity">
    <reaction evidence="1">
        <text>Thiol-dependent hydrolysis of ester, thioester, amide, peptide and isopeptide bonds formed by the C-terminal Gly of ubiquitin (a 76-residue protein attached to proteins as an intracellular targeting signal).</text>
        <dbReference type="EC" id="3.4.19.12"/>
    </reaction>
</comment>
<comment type="catalytic activity">
    <reaction evidence="1">
        <text>S-hexadecanoyl-L-cysteinyl-[protein] + H2O = L-cysteinyl-[protein] + hexadecanoate + H(+)</text>
        <dbReference type="Rhea" id="RHEA:19233"/>
        <dbReference type="Rhea" id="RHEA-COMP:10131"/>
        <dbReference type="Rhea" id="RHEA-COMP:11032"/>
        <dbReference type="ChEBI" id="CHEBI:7896"/>
        <dbReference type="ChEBI" id="CHEBI:15377"/>
        <dbReference type="ChEBI" id="CHEBI:15378"/>
        <dbReference type="ChEBI" id="CHEBI:29950"/>
        <dbReference type="ChEBI" id="CHEBI:74151"/>
        <dbReference type="EC" id="3.1.2.22"/>
    </reaction>
    <physiologicalReaction direction="left-to-right" evidence="1">
        <dbReference type="Rhea" id="RHEA:19234"/>
    </physiologicalReaction>
</comment>
<comment type="subunit">
    <text evidence="1">Interacts with RPS7.</text>
</comment>
<comment type="subcellular location">
    <subcellularLocation>
        <location evidence="2">Cytoplasm</location>
    </subcellularLocation>
</comment>
<comment type="similarity">
    <text evidence="5">Belongs to the DeSI family.</text>
</comment>
<evidence type="ECO:0000250" key="1">
    <source>
        <dbReference type="UniProtKB" id="Q9BSY9"/>
    </source>
</evidence>
<evidence type="ECO:0000250" key="2">
    <source>
        <dbReference type="UniProtKB" id="Q9D291"/>
    </source>
</evidence>
<evidence type="ECO:0000255" key="3">
    <source>
        <dbReference type="PROSITE-ProRule" id="PRU01205"/>
    </source>
</evidence>
<evidence type="ECO:0000256" key="4">
    <source>
        <dbReference type="SAM" id="MobiDB-lite"/>
    </source>
</evidence>
<evidence type="ECO:0000305" key="5"/>
<protein>
    <recommendedName>
        <fullName evidence="1">Deubiquitinase DESI2</fullName>
        <ecNumber evidence="1">3.4.19.12</ecNumber>
    </recommendedName>
    <alternativeName>
        <fullName>Desumoylating isopeptidase 2</fullName>
        <shortName>DeSI-2</shortName>
    </alternativeName>
    <alternativeName>
        <fullName>PPPDE peptidase domain-containing protein 1</fullName>
    </alternativeName>
    <alternativeName>
        <fullName>Palmitoyl protein thioesterase DESI2</fullName>
        <ecNumber evidence="1">3.1.2.22</ecNumber>
    </alternativeName>
    <alternativeName>
        <fullName>Protein FAM152A</fullName>
    </alternativeName>
    <alternativeName>
        <fullName>S-depalmitoylase DESI2</fullName>
    </alternativeName>
</protein>
<dbReference type="EC" id="3.4.19.12" evidence="1"/>
<dbReference type="EC" id="3.1.2.22" evidence="1"/>
<dbReference type="EMBL" id="DQ435075">
    <property type="protein sequence ID" value="ABD76387.1"/>
    <property type="molecule type" value="mRNA"/>
</dbReference>
<dbReference type="RefSeq" id="NP_001090888.1">
    <property type="nucleotide sequence ID" value="NM_001097419.1"/>
</dbReference>
<dbReference type="SMR" id="A3QRX8"/>
<dbReference type="FunCoup" id="A3QRX8">
    <property type="interactions" value="1903"/>
</dbReference>
<dbReference type="STRING" id="9823.ENSSSCP00000042694"/>
<dbReference type="MEROPS" id="C97.002"/>
<dbReference type="PaxDb" id="9823-ENSSSCP00000011594"/>
<dbReference type="Ensembl" id="ENSSSCT00070011638.1">
    <property type="protein sequence ID" value="ENSSSCP00070009590.1"/>
    <property type="gene ID" value="ENSSSCG00070006105.1"/>
</dbReference>
<dbReference type="Ensembl" id="ENSSSCT00110031700">
    <property type="protein sequence ID" value="ENSSSCP00110021407"/>
    <property type="gene ID" value="ENSSSCG00110016630"/>
</dbReference>
<dbReference type="Ensembl" id="ENSSSCT00115026853">
    <property type="protein sequence ID" value="ENSSSCP00115025456"/>
    <property type="gene ID" value="ENSSSCG00115015414"/>
</dbReference>
<dbReference type="GeneID" id="100037270"/>
<dbReference type="KEGG" id="ssc:100037270"/>
<dbReference type="CTD" id="51029"/>
<dbReference type="eggNOG" id="KOG0324">
    <property type="taxonomic scope" value="Eukaryota"/>
</dbReference>
<dbReference type="HOGENOM" id="CLU_069001_5_1_1"/>
<dbReference type="InParanoid" id="A3QRX8"/>
<dbReference type="OMA" id="VYWTKPG"/>
<dbReference type="OrthoDB" id="412286at2759"/>
<dbReference type="TreeFam" id="TF313188"/>
<dbReference type="Proteomes" id="UP000008227">
    <property type="component" value="Unplaced"/>
</dbReference>
<dbReference type="Proteomes" id="UP000314985">
    <property type="component" value="Chromosome 10"/>
</dbReference>
<dbReference type="Proteomes" id="UP000694570">
    <property type="component" value="Unplaced"/>
</dbReference>
<dbReference type="Proteomes" id="UP000694571">
    <property type="component" value="Unplaced"/>
</dbReference>
<dbReference type="Proteomes" id="UP000694720">
    <property type="component" value="Unplaced"/>
</dbReference>
<dbReference type="Proteomes" id="UP000694722">
    <property type="component" value="Unplaced"/>
</dbReference>
<dbReference type="Proteomes" id="UP000694723">
    <property type="component" value="Unplaced"/>
</dbReference>
<dbReference type="Proteomes" id="UP000694724">
    <property type="component" value="Unplaced"/>
</dbReference>
<dbReference type="Proteomes" id="UP000694725">
    <property type="component" value="Unplaced"/>
</dbReference>
<dbReference type="Proteomes" id="UP000694726">
    <property type="component" value="Unplaced"/>
</dbReference>
<dbReference type="Proteomes" id="UP000694727">
    <property type="component" value="Unplaced"/>
</dbReference>
<dbReference type="Proteomes" id="UP000694728">
    <property type="component" value="Unplaced"/>
</dbReference>
<dbReference type="GO" id="GO:0005737">
    <property type="term" value="C:cytoplasm"/>
    <property type="evidence" value="ECO:0000250"/>
    <property type="project" value="UniProtKB"/>
</dbReference>
<dbReference type="GO" id="GO:0004843">
    <property type="term" value="F:cysteine-type deubiquitinase activity"/>
    <property type="evidence" value="ECO:0007669"/>
    <property type="project" value="UniProtKB-EC"/>
</dbReference>
<dbReference type="GO" id="GO:0101005">
    <property type="term" value="F:deubiquitinase activity"/>
    <property type="evidence" value="ECO:0000318"/>
    <property type="project" value="GO_Central"/>
</dbReference>
<dbReference type="GO" id="GO:1990380">
    <property type="term" value="F:K48-linked deubiquitinase activity"/>
    <property type="evidence" value="ECO:0000250"/>
    <property type="project" value="UniProtKB"/>
</dbReference>
<dbReference type="GO" id="GO:0061578">
    <property type="term" value="F:K63-linked deubiquitinase activity"/>
    <property type="evidence" value="ECO:0000250"/>
    <property type="project" value="UniProtKB"/>
</dbReference>
<dbReference type="GO" id="GO:0052816">
    <property type="term" value="F:long-chain fatty acyl-CoA hydrolase activity"/>
    <property type="evidence" value="ECO:0000250"/>
    <property type="project" value="UniProtKB"/>
</dbReference>
<dbReference type="GO" id="GO:0008474">
    <property type="term" value="F:palmitoyl-(protein) hydrolase activity"/>
    <property type="evidence" value="ECO:0007669"/>
    <property type="project" value="RHEA"/>
</dbReference>
<dbReference type="GO" id="GO:0006508">
    <property type="term" value="P:proteolysis"/>
    <property type="evidence" value="ECO:0007669"/>
    <property type="project" value="UniProtKB-KW"/>
</dbReference>
<dbReference type="FunFam" id="3.90.1720.30:FF:000001">
    <property type="entry name" value="desumoylating isopeptidase 2"/>
    <property type="match status" value="1"/>
</dbReference>
<dbReference type="Gene3D" id="3.90.1720.30">
    <property type="entry name" value="PPPDE domains"/>
    <property type="match status" value="1"/>
</dbReference>
<dbReference type="InterPro" id="IPR008580">
    <property type="entry name" value="PPPDE_dom"/>
</dbReference>
<dbReference type="InterPro" id="IPR042266">
    <property type="entry name" value="PPPDE_sf"/>
</dbReference>
<dbReference type="PANTHER" id="PTHR12378">
    <property type="entry name" value="DESUMOYLATING ISOPEPTIDASE"/>
    <property type="match status" value="1"/>
</dbReference>
<dbReference type="PANTHER" id="PTHR12378:SF6">
    <property type="entry name" value="DEUBIQUITINASE DESI2"/>
    <property type="match status" value="1"/>
</dbReference>
<dbReference type="Pfam" id="PF05903">
    <property type="entry name" value="Peptidase_C97"/>
    <property type="match status" value="1"/>
</dbReference>
<dbReference type="SMART" id="SM01179">
    <property type="entry name" value="DUF862"/>
    <property type="match status" value="1"/>
</dbReference>
<dbReference type="PROSITE" id="PS51858">
    <property type="entry name" value="PPPDE"/>
    <property type="match status" value="1"/>
</dbReference>
<reference key="1">
    <citation type="submission" date="2006-02" db="EMBL/GenBank/DDBJ databases">
        <authorList>
            <person name="Zhu Z."/>
            <person name="Mo D."/>
            <person name="Li X."/>
            <person name="Zhao S."/>
            <person name="Li K."/>
        </authorList>
    </citation>
    <scope>NUCLEOTIDE SEQUENCE [MRNA]</scope>
    <source>
        <tissue>Skeletal muscle</tissue>
    </source>
</reference>
<organism>
    <name type="scientific">Sus scrofa</name>
    <name type="common">Pig</name>
    <dbReference type="NCBI Taxonomy" id="9823"/>
    <lineage>
        <taxon>Eukaryota</taxon>
        <taxon>Metazoa</taxon>
        <taxon>Chordata</taxon>
        <taxon>Craniata</taxon>
        <taxon>Vertebrata</taxon>
        <taxon>Euteleostomi</taxon>
        <taxon>Mammalia</taxon>
        <taxon>Eutheria</taxon>
        <taxon>Laurasiatheria</taxon>
        <taxon>Artiodactyla</taxon>
        <taxon>Suina</taxon>
        <taxon>Suidae</taxon>
        <taxon>Sus</taxon>
    </lineage>
</organism>
<keyword id="KW-0963">Cytoplasm</keyword>
<keyword id="KW-0378">Hydrolase</keyword>
<keyword id="KW-0645">Protease</keyword>
<keyword id="KW-1185">Reference proteome</keyword>
<keyword id="KW-0833">Ubl conjugation pathway</keyword>
<accession>A3QRX8</accession>
<gene>
    <name type="primary">DESI2</name>
    <name type="synonym">FAM152A</name>
    <name type="synonym">PPPDE1</name>
</gene>
<proteinExistence type="evidence at transcript level"/>